<comment type="function">
    <text evidence="1">In elementary bodies (EBs, the infectious stage, which is able to survive outside the host cell) provides the structural integrity of the outer envelope through disulfide cross-links with the small cysteine-rich protein and the large cysteine-rich periplasmic protein. It has been described in publications as the Sarkosyl-insoluble COMC (Chlamydia outer membrane complex), and serves as the functional equivalent of peptidoglycan (By similarity).</text>
</comment>
<comment type="function">
    <text evidence="1">Permits diffusion of specific solutes through the outer membrane.</text>
</comment>
<comment type="subunit">
    <text>Part of a disulfide cross-linked outer membrane complex (COMC) composed of the major outer membrane porin (MOMP), the small cysteine-rich protein (OmcA) and the large cysteine-rich periplasmic protein (OmcB).</text>
</comment>
<comment type="subcellular location">
    <subcellularLocation>
        <location evidence="1">Cell outer membrane</location>
        <topology evidence="1">Multi-pass membrane protein</topology>
    </subcellularLocation>
</comment>
<comment type="developmental stage">
    <text>It is present but some of the disulfide bonds are reduced in reticulate bodies (RBs).</text>
</comment>
<comment type="induction">
    <text evidence="2">In infected human monocytes transcripts are present by day 1 post-infection and have disappeared by day 3. In patients with confirmed synovial Chlamydia infections, 0/8 had detectable transcripts. In infected human Hep-2 cells, transcripts are visible from 5-48 hours post-infection.</text>
</comment>
<comment type="similarity">
    <text evidence="3">Belongs to the chlamydial porin (CP) (TC 1.B.2) family.</text>
</comment>
<keyword id="KW-0998">Cell outer membrane</keyword>
<keyword id="KW-0133">Cell shape</keyword>
<keyword id="KW-1015">Disulfide bond</keyword>
<keyword id="KW-0406">Ion transport</keyword>
<keyword id="KW-0472">Membrane</keyword>
<keyword id="KW-0626">Porin</keyword>
<keyword id="KW-1185">Reference proteome</keyword>
<keyword id="KW-0732">Signal</keyword>
<keyword id="KW-0812">Transmembrane</keyword>
<keyword id="KW-1134">Transmembrane beta strand</keyword>
<keyword id="KW-0813">Transport</keyword>
<gene>
    <name type="primary">ompA</name>
    <name type="synonym">omp1</name>
    <name type="ordered locus">CT_681</name>
</gene>
<sequence length="393" mass="42438">MKKLLKSVLVFAALSSASSLQALPVGNPAEPSLMIDGILWEGFGGDPCDPCATWCDAISMRVGYYGDFVFDRVLKTDVNKEFQMGAKPTTDTGNSAAPSTLTARENPAYGRHMQDAEMFTNAACMALNIWDRFDVFCTLGATSGYLKGNSASFNLVGLFGDNENQKTVKAESVPNMSFDQSVVELYTDTTFAWSVGARAALWECGCATLGASFQYAQSKPKVEELNVLCNAAEFTINKPKGYVGKEFPLDLTAGTDAATGTKDASIDYHEWQASLALSYRLNMFTPYIGVKWSRASFDADTIRIAQPKSATAIFDTTTLNPTIAGAGDVKTGAEGQLGDTMQIVSLQLNKMKSRKSCGIAVGTTIVDADKYAVTVETRLIDERAAHVNAQFRF</sequence>
<evidence type="ECO:0000250" key="1"/>
<evidence type="ECO:0000269" key="2">
    <source>
    </source>
</evidence>
<evidence type="ECO:0000305" key="3"/>
<proteinExistence type="evidence at transcript level"/>
<name>MOMPD_CHLTR</name>
<feature type="signal peptide" evidence="1">
    <location>
        <begin position="1"/>
        <end position="22"/>
    </location>
</feature>
<feature type="chain" id="PRO_0000020147" description="Major outer membrane porin, serovar D">
    <location>
        <begin position="23"/>
        <end position="393"/>
    </location>
</feature>
<reference key="1">
    <citation type="journal article" date="1992" name="Gene">
        <title>Complete sequence of the major outer membrane protein-encoding gene of Chlamydia trachomatis serovar Da.</title>
        <authorList>
            <person name="Sayada C."/>
            <person name="Denamur E."/>
            <person name="Elion J."/>
        </authorList>
    </citation>
    <scope>NUCLEOTIDE SEQUENCE [GENOMIC DNA]</scope>
    <source>
        <strain>D/B-120</strain>
    </source>
</reference>
<reference key="2">
    <citation type="journal article" date="1998" name="Infect. Immun.">
        <title>Phylogenetic analysis of the Chlamydia trachomatis major outer membrane protein and examination of potential pathogenic determinants.</title>
        <authorList>
            <person name="Stothard D.R."/>
            <person name="Boguslawski G."/>
            <person name="Jones R.B."/>
        </authorList>
    </citation>
    <scope>NUCLEOTIDE SEQUENCE [GENOMIC DNA]</scope>
    <source>
        <strain>D/IU-71960</strain>
    </source>
</reference>
<reference key="3">
    <citation type="journal article" date="1998" name="Science">
        <title>Genome sequence of an obligate intracellular pathogen of humans: Chlamydia trachomatis.</title>
        <authorList>
            <person name="Stephens R.S."/>
            <person name="Kalman S."/>
            <person name="Lammel C.J."/>
            <person name="Fan J."/>
            <person name="Marathe R."/>
            <person name="Aravind L."/>
            <person name="Mitchell W.P."/>
            <person name="Olinger L."/>
            <person name="Tatusov R.L."/>
            <person name="Zhao Q."/>
            <person name="Koonin E.V."/>
            <person name="Davis R.W."/>
        </authorList>
    </citation>
    <scope>NUCLEOTIDE SEQUENCE [LARGE SCALE GENOMIC DNA]</scope>
    <source>
        <strain>ATCC VR-885 / DSM 19411 / UW-3/Cx</strain>
    </source>
</reference>
<reference key="4">
    <citation type="journal article" date="2001" name="Mol. Microbiol.">
        <title>Expression of Chlamydia trachomatis genes encoding products required for DNA synthesis and cell division during active versus persistent infection.</title>
        <authorList>
            <person name="Gerard H.C."/>
            <person name="Krausse-Opatz B."/>
            <person name="Wang Z."/>
            <person name="Rudy D."/>
            <person name="Rao J.P."/>
            <person name="Zeidler H."/>
            <person name="Schumacher H.R."/>
            <person name="Whittum-Hudson J.A."/>
            <person name="Koehler L."/>
            <person name="Hudson A.P."/>
        </authorList>
    </citation>
    <scope>INDUCTION</scope>
    <source>
        <strain>Serovar K</strain>
    </source>
</reference>
<organism>
    <name type="scientific">Chlamydia trachomatis serovar D (strain ATCC VR-885 / DSM 19411 / UW-3/Cx)</name>
    <dbReference type="NCBI Taxonomy" id="272561"/>
    <lineage>
        <taxon>Bacteria</taxon>
        <taxon>Pseudomonadati</taxon>
        <taxon>Chlamydiota</taxon>
        <taxon>Chlamydiia</taxon>
        <taxon>Chlamydiales</taxon>
        <taxon>Chlamydiaceae</taxon>
        <taxon>Chlamydia/Chlamydophila group</taxon>
        <taxon>Chlamydia</taxon>
    </lineage>
</organism>
<protein>
    <recommendedName>
        <fullName>Major outer membrane porin, serovar D</fullName>
        <shortName>MOMP</shortName>
    </recommendedName>
</protein>
<accession>Q46409</accession>
<dbReference type="EMBL" id="X62918">
    <property type="protein sequence ID" value="CAA44701.1"/>
    <property type="molecule type" value="Genomic_DNA"/>
</dbReference>
<dbReference type="EMBL" id="AF063195">
    <property type="protein sequence ID" value="AAC31436.2"/>
    <property type="molecule type" value="Genomic_DNA"/>
</dbReference>
<dbReference type="EMBL" id="AE001273">
    <property type="protein sequence ID" value="AAC68276.1"/>
    <property type="molecule type" value="Genomic_DNA"/>
</dbReference>
<dbReference type="PIR" id="H71484">
    <property type="entry name" value="H71484"/>
</dbReference>
<dbReference type="RefSeq" id="NP_220200.1">
    <property type="nucleotide sequence ID" value="NC_000117.1"/>
</dbReference>
<dbReference type="RefSeq" id="WP_010725300.1">
    <property type="nucleotide sequence ID" value="NC_000117.1"/>
</dbReference>
<dbReference type="STRING" id="272561.CT_681"/>
<dbReference type="EnsemblBacteria" id="AAC68276">
    <property type="protein sequence ID" value="AAC68276"/>
    <property type="gene ID" value="CT_681"/>
</dbReference>
<dbReference type="GeneID" id="884473"/>
<dbReference type="KEGG" id="ctr:CT_681"/>
<dbReference type="PATRIC" id="fig|272561.5.peg.748"/>
<dbReference type="HOGENOM" id="CLU_693881_0_0_0"/>
<dbReference type="InParanoid" id="Q46409"/>
<dbReference type="OrthoDB" id="18912at2"/>
<dbReference type="Proteomes" id="UP000000431">
    <property type="component" value="Chromosome"/>
</dbReference>
<dbReference type="GO" id="GO:0009279">
    <property type="term" value="C:cell outer membrane"/>
    <property type="evidence" value="ECO:0007669"/>
    <property type="project" value="UniProtKB-SubCell"/>
</dbReference>
<dbReference type="GO" id="GO:0046930">
    <property type="term" value="C:pore complex"/>
    <property type="evidence" value="ECO:0007669"/>
    <property type="project" value="UniProtKB-KW"/>
</dbReference>
<dbReference type="GO" id="GO:0015288">
    <property type="term" value="F:porin activity"/>
    <property type="evidence" value="ECO:0007669"/>
    <property type="project" value="UniProtKB-KW"/>
</dbReference>
<dbReference type="GO" id="GO:0005198">
    <property type="term" value="F:structural molecule activity"/>
    <property type="evidence" value="ECO:0007669"/>
    <property type="project" value="InterPro"/>
</dbReference>
<dbReference type="GO" id="GO:0006811">
    <property type="term" value="P:monoatomic ion transport"/>
    <property type="evidence" value="ECO:0007669"/>
    <property type="project" value="UniProtKB-KW"/>
</dbReference>
<dbReference type="GO" id="GO:0008360">
    <property type="term" value="P:regulation of cell shape"/>
    <property type="evidence" value="ECO:0007669"/>
    <property type="project" value="UniProtKB-KW"/>
</dbReference>
<dbReference type="InterPro" id="IPR000604">
    <property type="entry name" value="Major_OMP_Chlamydia"/>
</dbReference>
<dbReference type="Pfam" id="PF01308">
    <property type="entry name" value="Chlam_OMP"/>
    <property type="match status" value="1"/>
</dbReference>
<dbReference type="PRINTS" id="PR01334">
    <property type="entry name" value="CHLAMIDIAOMP"/>
</dbReference>